<sequence>MAEYKNYTLNFGPVHPAAHGVLRLILELDGENVVRADPHVGLLHRGTEKLAEFKPYNQSIGYMDRLDYVSMMCNEHAYVMAIEKLLQLEVPERAKYIRVMFAEMTRILNHLLWVAACGIDLGAMTVFLYAFRVREDLFDCYEAVSGARMHAAYFRPGGVARDLPTQMPQYQKTRFTSKRKAKKLNEPRQGSMLDFLDHFVVDFEKSLDEIDTLLTDNRLWKQRTVDIGTVTAERAKELGFTGPMLRGSGVAWDLRKTQPYEVYHKLEFDIPIGANGDCYDRYLVRMAEMRESNKLIKQCVDWLRANPGPVLSDNHKVAPPKRNAMKNNMEELIHHFKLFSEGYCTPEGEVYVGTEHPKGEFGVYIKSDGANKPYRLKMRAPGFAHISAMDELLSGHMLADTPAIISTIDVVFGDVDR</sequence>
<proteinExistence type="inferred from homology"/>
<comment type="function">
    <text evidence="1">NDH-1 shuttles electrons from NADH, via FMN and iron-sulfur (Fe-S) centers, to quinones in the respiratory chain. The immediate electron acceptor for the enzyme in this species is believed to be ubiquinone. Couples the redox reaction to proton translocation (for every two electrons transferred, four hydrogen ions are translocated across the cytoplasmic membrane), and thus conserves the redox energy in a proton gradient.</text>
</comment>
<comment type="catalytic activity">
    <reaction evidence="1">
        <text>a quinone + NADH + 5 H(+)(in) = a quinol + NAD(+) + 4 H(+)(out)</text>
        <dbReference type="Rhea" id="RHEA:57888"/>
        <dbReference type="ChEBI" id="CHEBI:15378"/>
        <dbReference type="ChEBI" id="CHEBI:24646"/>
        <dbReference type="ChEBI" id="CHEBI:57540"/>
        <dbReference type="ChEBI" id="CHEBI:57945"/>
        <dbReference type="ChEBI" id="CHEBI:132124"/>
    </reaction>
</comment>
<comment type="subunit">
    <text evidence="1">NDH-1 is composed of 14 different subunits. Subunits NuoB, C, D, E, F, and G constitute the peripheral sector of the complex.</text>
</comment>
<comment type="subcellular location">
    <subcellularLocation>
        <location evidence="1">Cell inner membrane</location>
        <topology evidence="1">Peripheral membrane protein</topology>
        <orientation evidence="1">Cytoplasmic side</orientation>
    </subcellularLocation>
</comment>
<comment type="similarity">
    <text evidence="1">Belongs to the complex I 49 kDa subunit family.</text>
</comment>
<keyword id="KW-0997">Cell inner membrane</keyword>
<keyword id="KW-1003">Cell membrane</keyword>
<keyword id="KW-0472">Membrane</keyword>
<keyword id="KW-0520">NAD</keyword>
<keyword id="KW-0874">Quinone</keyword>
<keyword id="KW-1278">Translocase</keyword>
<keyword id="KW-0813">Transport</keyword>
<keyword id="KW-0830">Ubiquinone</keyword>
<organism>
    <name type="scientific">Francisella tularensis subsp. novicida (strain U112)</name>
    <dbReference type="NCBI Taxonomy" id="401614"/>
    <lineage>
        <taxon>Bacteria</taxon>
        <taxon>Pseudomonadati</taxon>
        <taxon>Pseudomonadota</taxon>
        <taxon>Gammaproteobacteria</taxon>
        <taxon>Thiotrichales</taxon>
        <taxon>Francisellaceae</taxon>
        <taxon>Francisella</taxon>
    </lineage>
</organism>
<gene>
    <name evidence="1" type="primary">nuoD</name>
    <name type="ordered locus">FTN_1677</name>
</gene>
<feature type="chain" id="PRO_0000371869" description="NADH-quinone oxidoreductase subunit D">
    <location>
        <begin position="1"/>
        <end position="417"/>
    </location>
</feature>
<evidence type="ECO:0000255" key="1">
    <source>
        <dbReference type="HAMAP-Rule" id="MF_01358"/>
    </source>
</evidence>
<protein>
    <recommendedName>
        <fullName evidence="1">NADH-quinone oxidoreductase subunit D</fullName>
        <ecNumber evidence="1">7.1.1.-</ecNumber>
    </recommendedName>
    <alternativeName>
        <fullName evidence="1">NADH dehydrogenase I subunit D</fullName>
    </alternativeName>
    <alternativeName>
        <fullName evidence="1">NDH-1 subunit D</fullName>
    </alternativeName>
</protein>
<accession>A0Q8G9</accession>
<name>NUOD_FRATN</name>
<reference key="1">
    <citation type="journal article" date="2007" name="Genome Biol.">
        <title>Comparison of Francisella tularensis genomes reveals evolutionary events associated with the emergence of human pathogenic strains.</title>
        <authorList>
            <person name="Rohmer L."/>
            <person name="Fong C."/>
            <person name="Abmayr S."/>
            <person name="Wasnick M."/>
            <person name="Larson Freeman T.J."/>
            <person name="Radey M."/>
            <person name="Guina T."/>
            <person name="Svensson K."/>
            <person name="Hayden H.S."/>
            <person name="Jacobs M."/>
            <person name="Gallagher L.A."/>
            <person name="Manoil C."/>
            <person name="Ernst R.K."/>
            <person name="Drees B."/>
            <person name="Buckley D."/>
            <person name="Haugen E."/>
            <person name="Bovee D."/>
            <person name="Zhou Y."/>
            <person name="Chang J."/>
            <person name="Levy R."/>
            <person name="Lim R."/>
            <person name="Gillett W."/>
            <person name="Guenthener D."/>
            <person name="Kang A."/>
            <person name="Shaffer S.A."/>
            <person name="Taylor G."/>
            <person name="Chen J."/>
            <person name="Gallis B."/>
            <person name="D'Argenio D.A."/>
            <person name="Forsman M."/>
            <person name="Olson M.V."/>
            <person name="Goodlett D.R."/>
            <person name="Kaul R."/>
            <person name="Miller S.I."/>
            <person name="Brittnacher M.J."/>
        </authorList>
    </citation>
    <scope>NUCLEOTIDE SEQUENCE [LARGE SCALE GENOMIC DNA]</scope>
    <source>
        <strain>U112</strain>
    </source>
</reference>
<dbReference type="EC" id="7.1.1.-" evidence="1"/>
<dbReference type="EMBL" id="CP000439">
    <property type="protein sequence ID" value="ABK90534.1"/>
    <property type="molecule type" value="Genomic_DNA"/>
</dbReference>
<dbReference type="RefSeq" id="WP_003037755.1">
    <property type="nucleotide sequence ID" value="NZ_CP009633.1"/>
</dbReference>
<dbReference type="SMR" id="A0Q8G9"/>
<dbReference type="KEGG" id="ftn:FTN_1677"/>
<dbReference type="KEGG" id="ftx:AW25_311"/>
<dbReference type="Proteomes" id="UP000000762">
    <property type="component" value="Chromosome"/>
</dbReference>
<dbReference type="GO" id="GO:0005886">
    <property type="term" value="C:plasma membrane"/>
    <property type="evidence" value="ECO:0007669"/>
    <property type="project" value="UniProtKB-SubCell"/>
</dbReference>
<dbReference type="GO" id="GO:0051287">
    <property type="term" value="F:NAD binding"/>
    <property type="evidence" value="ECO:0007669"/>
    <property type="project" value="InterPro"/>
</dbReference>
<dbReference type="GO" id="GO:0050136">
    <property type="term" value="F:NADH:ubiquinone reductase (non-electrogenic) activity"/>
    <property type="evidence" value="ECO:0007669"/>
    <property type="project" value="UniProtKB-UniRule"/>
</dbReference>
<dbReference type="GO" id="GO:0048038">
    <property type="term" value="F:quinone binding"/>
    <property type="evidence" value="ECO:0007669"/>
    <property type="project" value="UniProtKB-KW"/>
</dbReference>
<dbReference type="FunFam" id="1.10.645.10:FF:000005">
    <property type="entry name" value="NADH-quinone oxidoreductase subunit D"/>
    <property type="match status" value="1"/>
</dbReference>
<dbReference type="Gene3D" id="1.10.645.10">
    <property type="entry name" value="Cytochrome-c3 Hydrogenase, chain B"/>
    <property type="match status" value="1"/>
</dbReference>
<dbReference type="HAMAP" id="MF_01358">
    <property type="entry name" value="NDH1_NuoD"/>
    <property type="match status" value="1"/>
</dbReference>
<dbReference type="InterPro" id="IPR001135">
    <property type="entry name" value="NADH_Q_OxRdtase_suD"/>
</dbReference>
<dbReference type="InterPro" id="IPR014029">
    <property type="entry name" value="NADH_UbQ_OxRdtase_49kDa_CS"/>
</dbReference>
<dbReference type="InterPro" id="IPR022885">
    <property type="entry name" value="NDH1_su_D/H"/>
</dbReference>
<dbReference type="InterPro" id="IPR029014">
    <property type="entry name" value="NiFe-Hase_large"/>
</dbReference>
<dbReference type="NCBIfam" id="TIGR01962">
    <property type="entry name" value="NuoD"/>
    <property type="match status" value="1"/>
</dbReference>
<dbReference type="NCBIfam" id="NF004739">
    <property type="entry name" value="PRK06075.1"/>
    <property type="match status" value="1"/>
</dbReference>
<dbReference type="PANTHER" id="PTHR11993:SF10">
    <property type="entry name" value="NADH DEHYDROGENASE [UBIQUINONE] IRON-SULFUR PROTEIN 2, MITOCHONDRIAL"/>
    <property type="match status" value="1"/>
</dbReference>
<dbReference type="PANTHER" id="PTHR11993">
    <property type="entry name" value="NADH-UBIQUINONE OXIDOREDUCTASE 49 KDA SUBUNIT"/>
    <property type="match status" value="1"/>
</dbReference>
<dbReference type="Pfam" id="PF00346">
    <property type="entry name" value="Complex1_49kDa"/>
    <property type="match status" value="1"/>
</dbReference>
<dbReference type="SUPFAM" id="SSF56762">
    <property type="entry name" value="HydB/Nqo4-like"/>
    <property type="match status" value="1"/>
</dbReference>
<dbReference type="PROSITE" id="PS00535">
    <property type="entry name" value="COMPLEX1_49K"/>
    <property type="match status" value="1"/>
</dbReference>